<dbReference type="EC" id="6.3.2.1" evidence="1"/>
<dbReference type="EMBL" id="AM236086">
    <property type="protein sequence ID" value="CAK12071.1"/>
    <property type="molecule type" value="Genomic_DNA"/>
</dbReference>
<dbReference type="RefSeq" id="WP_011649131.1">
    <property type="nucleotide sequence ID" value="NC_008378.1"/>
</dbReference>
<dbReference type="SMR" id="Q1M4A1"/>
<dbReference type="EnsemblBacteria" id="CAK12071">
    <property type="protein sequence ID" value="CAK12071"/>
    <property type="gene ID" value="pRL120359"/>
</dbReference>
<dbReference type="KEGG" id="rle:pRL120359"/>
<dbReference type="eggNOG" id="COG0414">
    <property type="taxonomic scope" value="Bacteria"/>
</dbReference>
<dbReference type="HOGENOM" id="CLU_047148_0_0_5"/>
<dbReference type="UniPathway" id="UPA00028">
    <property type="reaction ID" value="UER00005"/>
</dbReference>
<dbReference type="Proteomes" id="UP000006575">
    <property type="component" value="Plasmid pRL12"/>
</dbReference>
<dbReference type="GO" id="GO:0005829">
    <property type="term" value="C:cytosol"/>
    <property type="evidence" value="ECO:0007669"/>
    <property type="project" value="TreeGrafter"/>
</dbReference>
<dbReference type="GO" id="GO:0005524">
    <property type="term" value="F:ATP binding"/>
    <property type="evidence" value="ECO:0007669"/>
    <property type="project" value="UniProtKB-KW"/>
</dbReference>
<dbReference type="GO" id="GO:0004592">
    <property type="term" value="F:pantoate-beta-alanine ligase activity"/>
    <property type="evidence" value="ECO:0007669"/>
    <property type="project" value="UniProtKB-UniRule"/>
</dbReference>
<dbReference type="GO" id="GO:0015940">
    <property type="term" value="P:pantothenate biosynthetic process"/>
    <property type="evidence" value="ECO:0007669"/>
    <property type="project" value="UniProtKB-UniRule"/>
</dbReference>
<dbReference type="CDD" id="cd00560">
    <property type="entry name" value="PanC"/>
    <property type="match status" value="1"/>
</dbReference>
<dbReference type="FunFam" id="3.40.50.620:FF:000013">
    <property type="entry name" value="Pantothenate synthetase"/>
    <property type="match status" value="1"/>
</dbReference>
<dbReference type="Gene3D" id="3.40.50.620">
    <property type="entry name" value="HUPs"/>
    <property type="match status" value="1"/>
</dbReference>
<dbReference type="Gene3D" id="3.30.1300.10">
    <property type="entry name" value="Pantoate-beta-alanine ligase, C-terminal domain"/>
    <property type="match status" value="1"/>
</dbReference>
<dbReference type="HAMAP" id="MF_00158">
    <property type="entry name" value="PanC"/>
    <property type="match status" value="1"/>
</dbReference>
<dbReference type="InterPro" id="IPR004821">
    <property type="entry name" value="Cyt_trans-like"/>
</dbReference>
<dbReference type="InterPro" id="IPR003721">
    <property type="entry name" value="Pantoate_ligase"/>
</dbReference>
<dbReference type="InterPro" id="IPR042176">
    <property type="entry name" value="Pantoate_ligase_C"/>
</dbReference>
<dbReference type="InterPro" id="IPR014729">
    <property type="entry name" value="Rossmann-like_a/b/a_fold"/>
</dbReference>
<dbReference type="NCBIfam" id="TIGR00125">
    <property type="entry name" value="cyt_tran_rel"/>
    <property type="match status" value="1"/>
</dbReference>
<dbReference type="NCBIfam" id="TIGR00018">
    <property type="entry name" value="panC"/>
    <property type="match status" value="1"/>
</dbReference>
<dbReference type="PANTHER" id="PTHR21299">
    <property type="entry name" value="CYTIDYLATE KINASE/PANTOATE-BETA-ALANINE LIGASE"/>
    <property type="match status" value="1"/>
</dbReference>
<dbReference type="PANTHER" id="PTHR21299:SF1">
    <property type="entry name" value="PANTOATE--BETA-ALANINE LIGASE"/>
    <property type="match status" value="1"/>
</dbReference>
<dbReference type="Pfam" id="PF02569">
    <property type="entry name" value="Pantoate_ligase"/>
    <property type="match status" value="1"/>
</dbReference>
<dbReference type="SUPFAM" id="SSF52374">
    <property type="entry name" value="Nucleotidylyl transferase"/>
    <property type="match status" value="1"/>
</dbReference>
<feature type="chain" id="PRO_0000305526" description="Pantothenate synthetase">
    <location>
        <begin position="1"/>
        <end position="303"/>
    </location>
</feature>
<feature type="active site" description="Proton donor" evidence="1">
    <location>
        <position position="37"/>
    </location>
</feature>
<feature type="binding site" evidence="1">
    <location>
        <begin position="30"/>
        <end position="37"/>
    </location>
    <ligand>
        <name>ATP</name>
        <dbReference type="ChEBI" id="CHEBI:30616"/>
    </ligand>
</feature>
<feature type="binding site" evidence="1">
    <location>
        <position position="61"/>
    </location>
    <ligand>
        <name>(R)-pantoate</name>
        <dbReference type="ChEBI" id="CHEBI:15980"/>
    </ligand>
</feature>
<feature type="binding site" evidence="1">
    <location>
        <position position="61"/>
    </location>
    <ligand>
        <name>beta-alanine</name>
        <dbReference type="ChEBI" id="CHEBI:57966"/>
    </ligand>
</feature>
<feature type="binding site" evidence="1">
    <location>
        <begin position="147"/>
        <end position="150"/>
    </location>
    <ligand>
        <name>ATP</name>
        <dbReference type="ChEBI" id="CHEBI:30616"/>
    </ligand>
</feature>
<feature type="binding site" evidence="1">
    <location>
        <position position="153"/>
    </location>
    <ligand>
        <name>(R)-pantoate</name>
        <dbReference type="ChEBI" id="CHEBI:15980"/>
    </ligand>
</feature>
<feature type="binding site" evidence="1">
    <location>
        <position position="176"/>
    </location>
    <ligand>
        <name>ATP</name>
        <dbReference type="ChEBI" id="CHEBI:30616"/>
    </ligand>
</feature>
<feature type="binding site" evidence="1">
    <location>
        <begin position="184"/>
        <end position="187"/>
    </location>
    <ligand>
        <name>ATP</name>
        <dbReference type="ChEBI" id="CHEBI:30616"/>
    </ligand>
</feature>
<reference key="1">
    <citation type="journal article" date="2006" name="Genome Biol.">
        <title>The genome of Rhizobium leguminosarum has recognizable core and accessory components.</title>
        <authorList>
            <person name="Young J.P.W."/>
            <person name="Crossman L.C."/>
            <person name="Johnston A.W.B."/>
            <person name="Thomson N.R."/>
            <person name="Ghazoui Z.F."/>
            <person name="Hull K.H."/>
            <person name="Wexler M."/>
            <person name="Curson A.R.J."/>
            <person name="Todd J.D."/>
            <person name="Poole P.S."/>
            <person name="Mauchline T.H."/>
            <person name="East A.K."/>
            <person name="Quail M.A."/>
            <person name="Churcher C."/>
            <person name="Arrowsmith C."/>
            <person name="Cherevach I."/>
            <person name="Chillingworth T."/>
            <person name="Clarke K."/>
            <person name="Cronin A."/>
            <person name="Davis P."/>
            <person name="Fraser A."/>
            <person name="Hance Z."/>
            <person name="Hauser H."/>
            <person name="Jagels K."/>
            <person name="Moule S."/>
            <person name="Mungall K."/>
            <person name="Norbertczak H."/>
            <person name="Rabbinowitsch E."/>
            <person name="Sanders M."/>
            <person name="Simmonds M."/>
            <person name="Whitehead S."/>
            <person name="Parkhill J."/>
        </authorList>
    </citation>
    <scope>NUCLEOTIDE SEQUENCE [LARGE SCALE GENOMIC DNA]</scope>
    <source>
        <strain>DSM 114642 / LMG 32736 / 3841</strain>
    </source>
</reference>
<sequence length="303" mass="33079">MRVFSSIDELRHTLDALRRQGRTVGLVPTMGYLHAGHMELVSRARAENDIVVVSIFVNPLQFGPAEDLSKYPRDLERDAAMLRQAGVNFLFSPGVEDMYSRPMLTVVDVPDLGRELEGAVRPGHFAGVATVVCKLFNIVQPQTAYFGAKDYQQVVIIKRMVDDLALPVRLISVPTVRDSDGLALSSRNVYLSEAERRAAVIVPQTLDEAERLVADGLTDPVELEARLTAFLSREPLAKPEVVAVRDAATLQPVTSIADPVVVALFVRVGSTRLLDNRVVGSNRFVGNNRVAGGQSLPGKGVTR</sequence>
<geneLocation type="plasmid">
    <name>pRL12</name>
</geneLocation>
<name>PANC_RHIJ3</name>
<accession>Q1M4A1</accession>
<comment type="function">
    <text evidence="1">Catalyzes the condensation of pantoate with beta-alanine in an ATP-dependent reaction via a pantoyl-adenylate intermediate.</text>
</comment>
<comment type="catalytic activity">
    <reaction evidence="1">
        <text>(R)-pantoate + beta-alanine + ATP = (R)-pantothenate + AMP + diphosphate + H(+)</text>
        <dbReference type="Rhea" id="RHEA:10912"/>
        <dbReference type="ChEBI" id="CHEBI:15378"/>
        <dbReference type="ChEBI" id="CHEBI:15980"/>
        <dbReference type="ChEBI" id="CHEBI:29032"/>
        <dbReference type="ChEBI" id="CHEBI:30616"/>
        <dbReference type="ChEBI" id="CHEBI:33019"/>
        <dbReference type="ChEBI" id="CHEBI:57966"/>
        <dbReference type="ChEBI" id="CHEBI:456215"/>
        <dbReference type="EC" id="6.3.2.1"/>
    </reaction>
</comment>
<comment type="pathway">
    <text evidence="1">Cofactor biosynthesis; (R)-pantothenate biosynthesis; (R)-pantothenate from (R)-pantoate and beta-alanine: step 1/1.</text>
</comment>
<comment type="subunit">
    <text evidence="1">Homodimer.</text>
</comment>
<comment type="subcellular location">
    <subcellularLocation>
        <location evidence="1">Cytoplasm</location>
    </subcellularLocation>
</comment>
<comment type="miscellaneous">
    <text evidence="1">The reaction proceeds by a bi uni uni bi ping pong mechanism.</text>
</comment>
<comment type="similarity">
    <text evidence="1">Belongs to the pantothenate synthetase family.</text>
</comment>
<keyword id="KW-0067">ATP-binding</keyword>
<keyword id="KW-0963">Cytoplasm</keyword>
<keyword id="KW-0436">Ligase</keyword>
<keyword id="KW-0547">Nucleotide-binding</keyword>
<keyword id="KW-0566">Pantothenate biosynthesis</keyword>
<keyword id="KW-0614">Plasmid</keyword>
<evidence type="ECO:0000255" key="1">
    <source>
        <dbReference type="HAMAP-Rule" id="MF_00158"/>
    </source>
</evidence>
<proteinExistence type="inferred from homology"/>
<gene>
    <name evidence="1" type="primary">panC</name>
    <name type="ordered locus">pRL120359</name>
</gene>
<protein>
    <recommendedName>
        <fullName evidence="1">Pantothenate synthetase</fullName>
        <shortName evidence="1">PS</shortName>
        <ecNumber evidence="1">6.3.2.1</ecNumber>
    </recommendedName>
    <alternativeName>
        <fullName evidence="1">Pantoate--beta-alanine ligase</fullName>
    </alternativeName>
    <alternativeName>
        <fullName evidence="1">Pantoate-activating enzyme</fullName>
    </alternativeName>
</protein>
<organism>
    <name type="scientific">Rhizobium johnstonii (strain DSM 114642 / LMG 32736 / 3841)</name>
    <name type="common">Rhizobium leguminosarum bv. viciae</name>
    <dbReference type="NCBI Taxonomy" id="216596"/>
    <lineage>
        <taxon>Bacteria</taxon>
        <taxon>Pseudomonadati</taxon>
        <taxon>Pseudomonadota</taxon>
        <taxon>Alphaproteobacteria</taxon>
        <taxon>Hyphomicrobiales</taxon>
        <taxon>Rhizobiaceae</taxon>
        <taxon>Rhizobium/Agrobacterium group</taxon>
        <taxon>Rhizobium</taxon>
        <taxon>Rhizobium johnstonii</taxon>
    </lineage>
</organism>